<sequence>MIPLEKPGSGGSPSAAASGSGPGGLLTEIRTAIRTEPFQDCYSLSPGRELGRGKFAVVRKCIQKDSGKEFAAKFMRKRRKGQDCRMEIIHEIAVLELAQDNPWVINLHEVYETSSEMILVLEYAAGGEISDQCVADRDEAFNEKDVQRLMRQILEGVHFLHTHDVVHLDLKPQNILLTSESPLGDIKIVDFGLSRIVKNSEELREIMGTPEYVAPEILSYDPISMATDMWSIGVLTYVMLTGISPFLGDNKQETFLNISQMNLSYSEEEFDTVSESAVDFIKKLLVKKPEDRATAEECLKHPWLTQSSIQDPVLRVKEALEEANALQKGDSVPEISSATEKPGTEESIVTEELIVVTSYTLGQCRQSEKEKMEQKAISKRFKFEEPLLQEIPGEFIY</sequence>
<protein>
    <recommendedName>
        <fullName>Serine/threonine-protein kinase 17A</fullName>
        <ecNumber>2.7.11.1</ecNumber>
    </recommendedName>
    <alternativeName>
        <fullName>DAP kinase-related apoptosis-inducing protein kinase 1</fullName>
        <shortName>rDRAK1</shortName>
    </alternativeName>
</protein>
<organism>
    <name type="scientific">Oryctolagus cuniculus</name>
    <name type="common">Rabbit</name>
    <dbReference type="NCBI Taxonomy" id="9986"/>
    <lineage>
        <taxon>Eukaryota</taxon>
        <taxon>Metazoa</taxon>
        <taxon>Chordata</taxon>
        <taxon>Craniata</taxon>
        <taxon>Vertebrata</taxon>
        <taxon>Euteleostomi</taxon>
        <taxon>Mammalia</taxon>
        <taxon>Eutheria</taxon>
        <taxon>Euarchontoglires</taxon>
        <taxon>Glires</taxon>
        <taxon>Lagomorpha</taxon>
        <taxon>Leporidae</taxon>
        <taxon>Oryctolagus</taxon>
    </lineage>
</organism>
<comment type="function">
    <text evidence="6">Acts as a positive regulator of apoptosis. May also act as a regulator of cellular reactive oxygen species.</text>
</comment>
<comment type="catalytic activity">
    <reaction>
        <text>L-seryl-[protein] + ATP = O-phospho-L-seryl-[protein] + ADP + H(+)</text>
        <dbReference type="Rhea" id="RHEA:17989"/>
        <dbReference type="Rhea" id="RHEA-COMP:9863"/>
        <dbReference type="Rhea" id="RHEA-COMP:11604"/>
        <dbReference type="ChEBI" id="CHEBI:15378"/>
        <dbReference type="ChEBI" id="CHEBI:29999"/>
        <dbReference type="ChEBI" id="CHEBI:30616"/>
        <dbReference type="ChEBI" id="CHEBI:83421"/>
        <dbReference type="ChEBI" id="CHEBI:456216"/>
        <dbReference type="EC" id="2.7.11.1"/>
    </reaction>
</comment>
<comment type="catalytic activity">
    <reaction>
        <text>L-threonyl-[protein] + ATP = O-phospho-L-threonyl-[protein] + ADP + H(+)</text>
        <dbReference type="Rhea" id="RHEA:46608"/>
        <dbReference type="Rhea" id="RHEA-COMP:11060"/>
        <dbReference type="Rhea" id="RHEA-COMP:11605"/>
        <dbReference type="ChEBI" id="CHEBI:15378"/>
        <dbReference type="ChEBI" id="CHEBI:30013"/>
        <dbReference type="ChEBI" id="CHEBI:30616"/>
        <dbReference type="ChEBI" id="CHEBI:61977"/>
        <dbReference type="ChEBI" id="CHEBI:456216"/>
        <dbReference type="EC" id="2.7.11.1"/>
    </reaction>
</comment>
<comment type="activity regulation">
    <text evidence="1">Inhibited by thiazolidinedione-type compounds: inhibited by furan- and pyridone- thiazolidinediones.</text>
</comment>
<comment type="subcellular location">
    <subcellularLocation>
        <location evidence="6">Nucleus</location>
    </subcellularLocation>
</comment>
<comment type="tissue specificity">
    <text evidence="6">Highly expressed in bone marrow. Lower levels in brain, heart, lung, liver and kidney.</text>
</comment>
<comment type="PTM">
    <text evidence="1">Autophosphorylated.</text>
</comment>
<comment type="similarity">
    <text evidence="7">Belongs to the protein kinase superfamily. CAMK Ser/Thr protein kinase family. DAP kinase subfamily.</text>
</comment>
<dbReference type="EC" id="2.7.11.1"/>
<dbReference type="EMBL" id="AB042195">
    <property type="protein sequence ID" value="BAB16111.1"/>
    <property type="molecule type" value="mRNA"/>
</dbReference>
<dbReference type="RefSeq" id="NP_001075475.1">
    <property type="nucleotide sequence ID" value="NM_001082006.1"/>
</dbReference>
<dbReference type="SMR" id="Q9GM70"/>
<dbReference type="STRING" id="9986.ENSOCUP00000049214"/>
<dbReference type="GeneID" id="100008622"/>
<dbReference type="KEGG" id="ocu:100008622"/>
<dbReference type="CTD" id="9263"/>
<dbReference type="InParanoid" id="Q9GM70"/>
<dbReference type="OrthoDB" id="504170at2759"/>
<dbReference type="BRENDA" id="2.7.11.1">
    <property type="organism ID" value="1749"/>
</dbReference>
<dbReference type="Proteomes" id="UP000001811">
    <property type="component" value="Unplaced"/>
</dbReference>
<dbReference type="GO" id="GO:0005634">
    <property type="term" value="C:nucleus"/>
    <property type="evidence" value="ECO:0007669"/>
    <property type="project" value="UniProtKB-SubCell"/>
</dbReference>
<dbReference type="GO" id="GO:0005524">
    <property type="term" value="F:ATP binding"/>
    <property type="evidence" value="ECO:0000250"/>
    <property type="project" value="UniProtKB"/>
</dbReference>
<dbReference type="GO" id="GO:0106310">
    <property type="term" value="F:protein serine kinase activity"/>
    <property type="evidence" value="ECO:0007669"/>
    <property type="project" value="RHEA"/>
</dbReference>
<dbReference type="GO" id="GO:0004674">
    <property type="term" value="F:protein serine/threonine kinase activity"/>
    <property type="evidence" value="ECO:0007669"/>
    <property type="project" value="UniProtKB-KW"/>
</dbReference>
<dbReference type="GO" id="GO:0006915">
    <property type="term" value="P:apoptotic process"/>
    <property type="evidence" value="ECO:0000315"/>
    <property type="project" value="UniProtKB"/>
</dbReference>
<dbReference type="GO" id="GO:0035556">
    <property type="term" value="P:intracellular signal transduction"/>
    <property type="evidence" value="ECO:0000314"/>
    <property type="project" value="UniProtKB"/>
</dbReference>
<dbReference type="GO" id="GO:0043065">
    <property type="term" value="P:positive regulation of apoptotic process"/>
    <property type="evidence" value="ECO:0000250"/>
    <property type="project" value="UniProtKB"/>
</dbReference>
<dbReference type="GO" id="GO:2000377">
    <property type="term" value="P:regulation of reactive oxygen species metabolic process"/>
    <property type="evidence" value="ECO:0000250"/>
    <property type="project" value="UniProtKB"/>
</dbReference>
<dbReference type="CDD" id="cd14197">
    <property type="entry name" value="STKc_DRAK1"/>
    <property type="match status" value="1"/>
</dbReference>
<dbReference type="FunFam" id="1.10.510.10:FF:000369">
    <property type="entry name" value="Serine/threonine kinase 17a"/>
    <property type="match status" value="1"/>
</dbReference>
<dbReference type="FunFam" id="3.30.200.20:FF:000175">
    <property type="entry name" value="Serine/threonine-protein kinase 17B"/>
    <property type="match status" value="1"/>
</dbReference>
<dbReference type="Gene3D" id="3.30.200.20">
    <property type="entry name" value="Phosphorylase Kinase, domain 1"/>
    <property type="match status" value="1"/>
</dbReference>
<dbReference type="Gene3D" id="1.10.510.10">
    <property type="entry name" value="Transferase(Phosphotransferase) domain 1"/>
    <property type="match status" value="1"/>
</dbReference>
<dbReference type="InterPro" id="IPR042704">
    <property type="entry name" value="DRAK1_STKc"/>
</dbReference>
<dbReference type="InterPro" id="IPR011009">
    <property type="entry name" value="Kinase-like_dom_sf"/>
</dbReference>
<dbReference type="InterPro" id="IPR000719">
    <property type="entry name" value="Prot_kinase_dom"/>
</dbReference>
<dbReference type="InterPro" id="IPR017441">
    <property type="entry name" value="Protein_kinase_ATP_BS"/>
</dbReference>
<dbReference type="InterPro" id="IPR008271">
    <property type="entry name" value="Ser/Thr_kinase_AS"/>
</dbReference>
<dbReference type="PANTHER" id="PTHR24342">
    <property type="entry name" value="SERINE/THREONINE-PROTEIN KINASE 17"/>
    <property type="match status" value="1"/>
</dbReference>
<dbReference type="PANTHER" id="PTHR24342:SF6">
    <property type="entry name" value="SERINE_THREONINE-PROTEIN KINASE 17A"/>
    <property type="match status" value="1"/>
</dbReference>
<dbReference type="Pfam" id="PF00069">
    <property type="entry name" value="Pkinase"/>
    <property type="match status" value="1"/>
</dbReference>
<dbReference type="SMART" id="SM00220">
    <property type="entry name" value="S_TKc"/>
    <property type="match status" value="1"/>
</dbReference>
<dbReference type="SUPFAM" id="SSF56112">
    <property type="entry name" value="Protein kinase-like (PK-like)"/>
    <property type="match status" value="1"/>
</dbReference>
<dbReference type="PROSITE" id="PS00107">
    <property type="entry name" value="PROTEIN_KINASE_ATP"/>
    <property type="match status" value="1"/>
</dbReference>
<dbReference type="PROSITE" id="PS50011">
    <property type="entry name" value="PROTEIN_KINASE_DOM"/>
    <property type="match status" value="1"/>
</dbReference>
<dbReference type="PROSITE" id="PS00108">
    <property type="entry name" value="PROTEIN_KINASE_ST"/>
    <property type="match status" value="1"/>
</dbReference>
<reference key="1">
    <citation type="journal article" date="2001" name="J. Biol. Chem.">
        <title>rDRAK1, a novel kinase related to apoptosis, is strongly expressed in active osteoclasts and induces apoptosis.</title>
        <authorList>
            <person name="Kojima H."/>
            <person name="Nemoto A."/>
            <person name="Uemura T."/>
            <person name="Honma R."/>
            <person name="Ogura M."/>
            <person name="Liu Y.-K."/>
        </authorList>
    </citation>
    <scope>NUCLEOTIDE SEQUENCE [MRNA]</scope>
    <scope>TISSUE SPECIFICITY</scope>
    <scope>FUNCTION</scope>
    <scope>SUBCELLULAR LOCATION</scope>
    <source>
        <tissue>Osteoclast</tissue>
    </source>
</reference>
<proteinExistence type="evidence at transcript level"/>
<keyword id="KW-0053">Apoptosis</keyword>
<keyword id="KW-0067">ATP-binding</keyword>
<keyword id="KW-0418">Kinase</keyword>
<keyword id="KW-0547">Nucleotide-binding</keyword>
<keyword id="KW-0539">Nucleus</keyword>
<keyword id="KW-0597">Phosphoprotein</keyword>
<keyword id="KW-1185">Reference proteome</keyword>
<keyword id="KW-0723">Serine/threonine-protein kinase</keyword>
<keyword id="KW-0808">Transferase</keyword>
<evidence type="ECO:0000250" key="1"/>
<evidence type="ECO:0000250" key="2">
    <source>
        <dbReference type="UniProtKB" id="Q9UEE5"/>
    </source>
</evidence>
<evidence type="ECO:0000255" key="3">
    <source>
        <dbReference type="PROSITE-ProRule" id="PRU00159"/>
    </source>
</evidence>
<evidence type="ECO:0000255" key="4">
    <source>
        <dbReference type="PROSITE-ProRule" id="PRU10027"/>
    </source>
</evidence>
<evidence type="ECO:0000256" key="5">
    <source>
        <dbReference type="SAM" id="MobiDB-lite"/>
    </source>
</evidence>
<evidence type="ECO:0000269" key="6">
    <source>
    </source>
</evidence>
<evidence type="ECO:0000305" key="7"/>
<feature type="chain" id="PRO_0000086705" description="Serine/threonine-protein kinase 17A">
    <location>
        <begin position="1"/>
        <end position="397"/>
    </location>
</feature>
<feature type="domain" description="Protein kinase" evidence="3">
    <location>
        <begin position="44"/>
        <end position="304"/>
    </location>
</feature>
<feature type="region of interest" description="Disordered" evidence="5">
    <location>
        <begin position="1"/>
        <end position="23"/>
    </location>
</feature>
<feature type="active site" description="Proton acceptor" evidence="3 4">
    <location>
        <position position="169"/>
    </location>
</feature>
<feature type="binding site" evidence="3">
    <location>
        <begin position="50"/>
        <end position="58"/>
    </location>
    <ligand>
        <name>ATP</name>
        <dbReference type="ChEBI" id="CHEBI:30616"/>
    </ligand>
</feature>
<feature type="binding site" evidence="3">
    <location>
        <position position="73"/>
    </location>
    <ligand>
        <name>ATP</name>
        <dbReference type="ChEBI" id="CHEBI:30616"/>
    </ligand>
</feature>
<feature type="modified residue" description="Phosphoserine" evidence="2">
    <location>
        <position position="9"/>
    </location>
</feature>
<name>ST17A_RABIT</name>
<gene>
    <name type="primary">STK17A</name>
    <name type="synonym">DRAK1</name>
</gene>
<accession>Q9GM70</accession>